<organism>
    <name type="scientific">Salmonella enteritidis PT4 (strain P125109)</name>
    <dbReference type="NCBI Taxonomy" id="550537"/>
    <lineage>
        <taxon>Bacteria</taxon>
        <taxon>Pseudomonadati</taxon>
        <taxon>Pseudomonadota</taxon>
        <taxon>Gammaproteobacteria</taxon>
        <taxon>Enterobacterales</taxon>
        <taxon>Enterobacteriaceae</taxon>
        <taxon>Salmonella</taxon>
    </lineage>
</organism>
<reference key="1">
    <citation type="journal article" date="2008" name="Genome Res.">
        <title>Comparative genome analysis of Salmonella enteritidis PT4 and Salmonella gallinarum 287/91 provides insights into evolutionary and host adaptation pathways.</title>
        <authorList>
            <person name="Thomson N.R."/>
            <person name="Clayton D.J."/>
            <person name="Windhorst D."/>
            <person name="Vernikos G."/>
            <person name="Davidson S."/>
            <person name="Churcher C."/>
            <person name="Quail M.A."/>
            <person name="Stevens M."/>
            <person name="Jones M.A."/>
            <person name="Watson M."/>
            <person name="Barron A."/>
            <person name="Layton A."/>
            <person name="Pickard D."/>
            <person name="Kingsley R.A."/>
            <person name="Bignell A."/>
            <person name="Clark L."/>
            <person name="Harris B."/>
            <person name="Ormond D."/>
            <person name="Abdellah Z."/>
            <person name="Brooks K."/>
            <person name="Cherevach I."/>
            <person name="Chillingworth T."/>
            <person name="Woodward J."/>
            <person name="Norberczak H."/>
            <person name="Lord A."/>
            <person name="Arrowsmith C."/>
            <person name="Jagels K."/>
            <person name="Moule S."/>
            <person name="Mungall K."/>
            <person name="Saunders M."/>
            <person name="Whitehead S."/>
            <person name="Chabalgoity J.A."/>
            <person name="Maskell D."/>
            <person name="Humphreys T."/>
            <person name="Roberts M."/>
            <person name="Barrow P.A."/>
            <person name="Dougan G."/>
            <person name="Parkhill J."/>
        </authorList>
    </citation>
    <scope>NUCLEOTIDE SEQUENCE [LARGE SCALE GENOMIC DNA]</scope>
    <source>
        <strain>P125109</strain>
    </source>
</reference>
<protein>
    <recommendedName>
        <fullName evidence="1">Ribosomal RNA large subunit methyltransferase G</fullName>
        <ecNumber evidence="1">2.1.1.174</ecNumber>
    </recommendedName>
    <alternativeName>
        <fullName evidence="1">23S rRNA m2G1835 methyltransferase</fullName>
    </alternativeName>
    <alternativeName>
        <fullName evidence="1">rRNA (guanine-N(2)-)-methyltransferase RlmG</fullName>
    </alternativeName>
</protein>
<keyword id="KW-0963">Cytoplasm</keyword>
<keyword id="KW-0489">Methyltransferase</keyword>
<keyword id="KW-0698">rRNA processing</keyword>
<keyword id="KW-0949">S-adenosyl-L-methionine</keyword>
<keyword id="KW-0808">Transferase</keyword>
<dbReference type="EC" id="2.1.1.174" evidence="1"/>
<dbReference type="EMBL" id="AM933172">
    <property type="protein sequence ID" value="CAR34638.1"/>
    <property type="molecule type" value="Genomic_DNA"/>
</dbReference>
<dbReference type="RefSeq" id="WP_000019988.1">
    <property type="nucleotide sequence ID" value="NC_011294.1"/>
</dbReference>
<dbReference type="SMR" id="B5QZ55"/>
<dbReference type="KEGG" id="set:SEN3062"/>
<dbReference type="HOGENOM" id="CLU_040288_4_0_6"/>
<dbReference type="Proteomes" id="UP000000613">
    <property type="component" value="Chromosome"/>
</dbReference>
<dbReference type="GO" id="GO:0005737">
    <property type="term" value="C:cytoplasm"/>
    <property type="evidence" value="ECO:0007669"/>
    <property type="project" value="UniProtKB-SubCell"/>
</dbReference>
<dbReference type="GO" id="GO:0052916">
    <property type="term" value="F:23S rRNA (guanine(1835)-N(2))-methyltransferase activity"/>
    <property type="evidence" value="ECO:0007669"/>
    <property type="project" value="UniProtKB-EC"/>
</dbReference>
<dbReference type="GO" id="GO:0003676">
    <property type="term" value="F:nucleic acid binding"/>
    <property type="evidence" value="ECO:0007669"/>
    <property type="project" value="InterPro"/>
</dbReference>
<dbReference type="CDD" id="cd02440">
    <property type="entry name" value="AdoMet_MTases"/>
    <property type="match status" value="1"/>
</dbReference>
<dbReference type="FunFam" id="3.40.50.150:FF:000046">
    <property type="entry name" value="Ribosomal RNA large subunit methyltransferase G"/>
    <property type="match status" value="1"/>
</dbReference>
<dbReference type="FunFam" id="3.40.50.150:FF:000047">
    <property type="entry name" value="Ribosomal RNA large subunit methyltransferase G"/>
    <property type="match status" value="1"/>
</dbReference>
<dbReference type="Gene3D" id="3.40.50.150">
    <property type="entry name" value="Vaccinia Virus protein VP39"/>
    <property type="match status" value="2"/>
</dbReference>
<dbReference type="HAMAP" id="MF_01859">
    <property type="entry name" value="23SrRNA_methyltr_G"/>
    <property type="match status" value="1"/>
</dbReference>
<dbReference type="InterPro" id="IPR002052">
    <property type="entry name" value="DNA_methylase_N6_adenine_CS"/>
</dbReference>
<dbReference type="InterPro" id="IPR017237">
    <property type="entry name" value="rRNA_m2G-MeTrfase_RlmG"/>
</dbReference>
<dbReference type="InterPro" id="IPR046977">
    <property type="entry name" value="RsmC/RlmG"/>
</dbReference>
<dbReference type="InterPro" id="IPR029063">
    <property type="entry name" value="SAM-dependent_MTases_sf"/>
</dbReference>
<dbReference type="InterPro" id="IPR007848">
    <property type="entry name" value="Small_mtfrase_dom"/>
</dbReference>
<dbReference type="NCBIfam" id="NF011577">
    <property type="entry name" value="PRK15001.1"/>
    <property type="match status" value="1"/>
</dbReference>
<dbReference type="PANTHER" id="PTHR47816:SF5">
    <property type="entry name" value="RIBOSOMAL RNA LARGE SUBUNIT METHYLTRANSFERASE G"/>
    <property type="match status" value="1"/>
</dbReference>
<dbReference type="PANTHER" id="PTHR47816">
    <property type="entry name" value="RIBOSOMAL RNA SMALL SUBUNIT METHYLTRANSFERASE C"/>
    <property type="match status" value="1"/>
</dbReference>
<dbReference type="Pfam" id="PF05175">
    <property type="entry name" value="MTS"/>
    <property type="match status" value="1"/>
</dbReference>
<dbReference type="PIRSF" id="PIRSF037565">
    <property type="entry name" value="RRNA_m2G_Mtase_RsmD_prd"/>
    <property type="match status" value="1"/>
</dbReference>
<dbReference type="SUPFAM" id="SSF53335">
    <property type="entry name" value="S-adenosyl-L-methionine-dependent methyltransferases"/>
    <property type="match status" value="1"/>
</dbReference>
<sequence>MSHVDDGFRSLTLKRFPQTDDVNPLLAWEAADEYLLQQLDETEIRGPVLILNDTFGALSCALAEHSPYSIGDSYLSELGTRENLRHNGIAESSVTFLDSTADYPQAPGVVLIKVPKTLALLEQQLRALRKVVTAQTRIIAGAKARDIHTSTLELFEKVLGPTTTTLAWKKARLINCTFSHPQLADAPQTLSWKLEDTGWTIHNHANVFSRTGLDIGARFFMQHLPENLDGEIVDLGCGNGVIGLSLLAKNPQANVVFVDESPMAVDSSRLNVETNLPEAFERCEFMINNALSGVEPFRFNAVFCNPPFHQKHALTDNIAWEMFHHARRCLKINGELYIVANRHLDYFHKLKKIFGNCATIATNNKFVILKAVKQGHRR</sequence>
<proteinExistence type="inferred from homology"/>
<accession>B5QZ55</accession>
<evidence type="ECO:0000255" key="1">
    <source>
        <dbReference type="HAMAP-Rule" id="MF_01859"/>
    </source>
</evidence>
<name>RLMG_SALEP</name>
<comment type="function">
    <text evidence="1">Specifically methylates the guanine in position 1835 (m2G1835) of 23S rRNA.</text>
</comment>
<comment type="catalytic activity">
    <reaction evidence="1">
        <text>guanosine(1835) in 23S rRNA + S-adenosyl-L-methionine = N(2)-methylguanosine(1835) in 23S rRNA + S-adenosyl-L-homocysteine + H(+)</text>
        <dbReference type="Rhea" id="RHEA:42744"/>
        <dbReference type="Rhea" id="RHEA-COMP:10217"/>
        <dbReference type="Rhea" id="RHEA-COMP:10218"/>
        <dbReference type="ChEBI" id="CHEBI:15378"/>
        <dbReference type="ChEBI" id="CHEBI:57856"/>
        <dbReference type="ChEBI" id="CHEBI:59789"/>
        <dbReference type="ChEBI" id="CHEBI:74269"/>
        <dbReference type="ChEBI" id="CHEBI:74481"/>
        <dbReference type="EC" id="2.1.1.174"/>
    </reaction>
</comment>
<comment type="subcellular location">
    <subcellularLocation>
        <location evidence="1">Cytoplasm</location>
    </subcellularLocation>
</comment>
<comment type="similarity">
    <text evidence="1">Belongs to the methyltransferase superfamily. RlmG family.</text>
</comment>
<feature type="chain" id="PRO_0000366493" description="Ribosomal RNA large subunit methyltransferase G">
    <location>
        <begin position="1"/>
        <end position="378"/>
    </location>
</feature>
<gene>
    <name evidence="1" type="primary">rlmG</name>
    <name type="ordered locus">SEN3062</name>
</gene>